<sequence length="202" mass="22314">MKARELDVPGAWEITPTIHVDSRGLFFEWLTDHGFRAFAGHSLDVRQVNCSVSSAGVLRGLHFAQLPPSQAKYVTCVSGSVFDVVVDIREGSPTFGRWDSVLLDDQDRRTIYVSEGLAHGFLALQDNSTVMYLCSAEYNPQREHTICATDPTLAVDWPLVDGAAPSLSDRDAAAPSFEDVRASGLLPRWEQTQRFIGEMRGT</sequence>
<keyword id="KW-0002">3D-structure</keyword>
<keyword id="KW-0119">Carbohydrate metabolism</keyword>
<keyword id="KW-0413">Isomerase</keyword>
<keyword id="KW-1185">Reference proteome</keyword>
<gene>
    <name type="primary">rmlC</name>
    <name type="synonym">strM</name>
    <name type="ordered locus">Rv3465</name>
</gene>
<organism>
    <name type="scientific">Mycobacterium tuberculosis (strain ATCC 25618 / H37Rv)</name>
    <dbReference type="NCBI Taxonomy" id="83332"/>
    <lineage>
        <taxon>Bacteria</taxon>
        <taxon>Bacillati</taxon>
        <taxon>Actinomycetota</taxon>
        <taxon>Actinomycetes</taxon>
        <taxon>Mycobacteriales</taxon>
        <taxon>Mycobacteriaceae</taxon>
        <taxon>Mycobacterium</taxon>
        <taxon>Mycobacterium tuberculosis complex</taxon>
    </lineage>
</organism>
<evidence type="ECO:0000250" key="1">
    <source>
        <dbReference type="UniProtKB" id="P26394"/>
    </source>
</evidence>
<evidence type="ECO:0000250" key="2">
    <source>
        <dbReference type="UniProtKB" id="Q5SFD1"/>
    </source>
</evidence>
<evidence type="ECO:0000250" key="3">
    <source>
        <dbReference type="UniProtKB" id="Q9HU21"/>
    </source>
</evidence>
<evidence type="ECO:0000269" key="4">
    <source>
    </source>
</evidence>
<evidence type="ECO:0000269" key="5">
    <source>
    </source>
</evidence>
<evidence type="ECO:0000269" key="6">
    <source>
    </source>
</evidence>
<evidence type="ECO:0000269" key="7">
    <source>
    </source>
</evidence>
<evidence type="ECO:0000269" key="8">
    <source>
    </source>
</evidence>
<evidence type="ECO:0000303" key="9">
    <source>
    </source>
</evidence>
<evidence type="ECO:0000303" key="10">
    <source>
    </source>
</evidence>
<evidence type="ECO:0000305" key="11"/>
<evidence type="ECO:0000305" key="12">
    <source>
    </source>
</evidence>
<evidence type="ECO:0000305" key="13">
    <source>
    </source>
</evidence>
<evidence type="ECO:0007744" key="14">
    <source>
        <dbReference type="PDB" id="1PM7"/>
    </source>
</evidence>
<evidence type="ECO:0007744" key="15">
    <source>
        <dbReference type="PDB" id="2IXC"/>
    </source>
</evidence>
<evidence type="ECO:0007829" key="16">
    <source>
        <dbReference type="PDB" id="1UPI"/>
    </source>
</evidence>
<evidence type="ECO:0007829" key="17">
    <source>
        <dbReference type="PDB" id="2IXC"/>
    </source>
</evidence>
<protein>
    <recommendedName>
        <fullName evidence="11">dTDP-4-dehydrorhamnose 3,5-epimerase</fullName>
        <ecNumber evidence="6">5.1.3.13</ecNumber>
    </recommendedName>
    <alternativeName>
        <fullName evidence="11">Thymidine diphospho-4-keto-rhamnose 3,5-epimerase</fullName>
    </alternativeName>
    <alternativeName>
        <fullName evidence="10">dTDP-4-keto-6-deoxyglucose 3,5-epimerase</fullName>
    </alternativeName>
    <alternativeName>
        <fullName evidence="9">dTDP-6-deoxy-D-xylo-4-hexulose 3,5-epimerase</fullName>
    </alternativeName>
    <alternativeName>
        <fullName evidence="11">dTDP-L-rhamnose synthase</fullName>
    </alternativeName>
</protein>
<accession>P9WH11</accession>
<accession>L0TE75</accession>
<accession>O06330</accession>
<accession>Q7D5I3</accession>
<comment type="function">
    <text evidence="6">Catalyzes the epimerization of the C3' and C5'positions of dTDP-6-deoxy-D-xylo-4-hexulose, forming dTDP-6-deoxy-L-lyxo-4-hexulose. Involved in the biosynthesis of the dTDP-L-rhamnose which is a component of the critical linker, D-N-acetylglucosamine-L-rhamnose disaccharide, which connects the galactan region of arabinogalactan to peptidoglycan via a phosphodiester linkage.</text>
</comment>
<comment type="catalytic activity">
    <reaction evidence="6">
        <text>dTDP-4-dehydro-6-deoxy-alpha-D-glucose = dTDP-4-dehydro-beta-L-rhamnose</text>
        <dbReference type="Rhea" id="RHEA:16969"/>
        <dbReference type="ChEBI" id="CHEBI:57649"/>
        <dbReference type="ChEBI" id="CHEBI:62830"/>
        <dbReference type="EC" id="5.1.3.13"/>
    </reaction>
</comment>
<comment type="pathway">
    <text evidence="1">Carbohydrate biosynthesis; dTDP-L-rhamnose biosynthesis.</text>
</comment>
<comment type="subunit">
    <text evidence="4 5 7">Homodimer.</text>
</comment>
<comment type="miscellaneous">
    <text evidence="8">Was identified as a high-confidence drug target.</text>
</comment>
<comment type="similarity">
    <text evidence="11">Belongs to the dTDP-4-dehydrorhamnose 3,5-epimerase family.</text>
</comment>
<name>RMLC_MYCTU</name>
<proteinExistence type="evidence at protein level"/>
<dbReference type="EC" id="5.1.3.13" evidence="6"/>
<dbReference type="EMBL" id="AL123456">
    <property type="protein sequence ID" value="CCP46287.1"/>
    <property type="molecule type" value="Genomic_DNA"/>
</dbReference>
<dbReference type="PIR" id="F70566">
    <property type="entry name" value="F70566"/>
</dbReference>
<dbReference type="RefSeq" id="NP_217982.1">
    <property type="nucleotide sequence ID" value="NC_000962.3"/>
</dbReference>
<dbReference type="PDB" id="1PM7">
    <property type="method" value="X-ray"/>
    <property type="resolution" value="2.20 A"/>
    <property type="chains" value="A/B=1-202"/>
</dbReference>
<dbReference type="PDB" id="1UPI">
    <property type="method" value="X-ray"/>
    <property type="resolution" value="1.70 A"/>
    <property type="chains" value="A=1-202"/>
</dbReference>
<dbReference type="PDB" id="2IXC">
    <property type="method" value="X-ray"/>
    <property type="resolution" value="1.79 A"/>
    <property type="chains" value="A/B/C/D=1-202"/>
</dbReference>
<dbReference type="PDBsum" id="1PM7"/>
<dbReference type="PDBsum" id="1UPI"/>
<dbReference type="PDBsum" id="2IXC"/>
<dbReference type="SMR" id="P9WH11"/>
<dbReference type="FunCoup" id="P9WH11">
    <property type="interactions" value="40"/>
</dbReference>
<dbReference type="STRING" id="83332.Rv3465"/>
<dbReference type="ChEMBL" id="CHEMBL3883301"/>
<dbReference type="DrugBank" id="DB04530">
    <property type="generic name" value="S,S-(2-Hydroxyethyl)Thiocysteine"/>
</dbReference>
<dbReference type="PaxDb" id="83332-Rv3465"/>
<dbReference type="DNASU" id="887352"/>
<dbReference type="GeneID" id="887352"/>
<dbReference type="KEGG" id="mtu:Rv3465"/>
<dbReference type="KEGG" id="mtv:RVBD_3465"/>
<dbReference type="TubercuList" id="Rv3465"/>
<dbReference type="eggNOG" id="COG1898">
    <property type="taxonomic scope" value="Bacteria"/>
</dbReference>
<dbReference type="InParanoid" id="P9WH11"/>
<dbReference type="OrthoDB" id="9800680at2"/>
<dbReference type="PhylomeDB" id="P9WH11"/>
<dbReference type="BRENDA" id="5.1.3.13">
    <property type="organism ID" value="3445"/>
</dbReference>
<dbReference type="UniPathway" id="UPA00124"/>
<dbReference type="EvolutionaryTrace" id="P9WH11"/>
<dbReference type="PRO" id="PR:P9WH11"/>
<dbReference type="Proteomes" id="UP000001584">
    <property type="component" value="Chromosome"/>
</dbReference>
<dbReference type="GO" id="GO:0005829">
    <property type="term" value="C:cytosol"/>
    <property type="evidence" value="ECO:0000318"/>
    <property type="project" value="GO_Central"/>
</dbReference>
<dbReference type="GO" id="GO:0008830">
    <property type="term" value="F:dTDP-4-dehydrorhamnose 3,5-epimerase activity"/>
    <property type="evidence" value="ECO:0000314"/>
    <property type="project" value="MTBBASE"/>
</dbReference>
<dbReference type="GO" id="GO:0019305">
    <property type="term" value="P:dTDP-rhamnose biosynthetic process"/>
    <property type="evidence" value="ECO:0000314"/>
    <property type="project" value="MTBBASE"/>
</dbReference>
<dbReference type="GO" id="GO:0000271">
    <property type="term" value="P:polysaccharide biosynthetic process"/>
    <property type="evidence" value="ECO:0000316"/>
    <property type="project" value="UniProtKB"/>
</dbReference>
<dbReference type="CDD" id="cd00438">
    <property type="entry name" value="cupin_RmlC"/>
    <property type="match status" value="1"/>
</dbReference>
<dbReference type="FunFam" id="2.60.120.10:FF:000165">
    <property type="entry name" value="dTDP-4-dehydrorhamnose 3,5-epimerase"/>
    <property type="match status" value="1"/>
</dbReference>
<dbReference type="Gene3D" id="2.60.120.10">
    <property type="entry name" value="Jelly Rolls"/>
    <property type="match status" value="1"/>
</dbReference>
<dbReference type="InterPro" id="IPR000888">
    <property type="entry name" value="RmlC-like"/>
</dbReference>
<dbReference type="InterPro" id="IPR014710">
    <property type="entry name" value="RmlC-like_jellyroll"/>
</dbReference>
<dbReference type="InterPro" id="IPR011051">
    <property type="entry name" value="RmlC_Cupin_sf"/>
</dbReference>
<dbReference type="NCBIfam" id="TIGR01221">
    <property type="entry name" value="rmlC"/>
    <property type="match status" value="1"/>
</dbReference>
<dbReference type="PANTHER" id="PTHR21047">
    <property type="entry name" value="DTDP-6-DEOXY-D-GLUCOSE-3,5 EPIMERASE"/>
    <property type="match status" value="1"/>
</dbReference>
<dbReference type="PANTHER" id="PTHR21047:SF2">
    <property type="entry name" value="THYMIDINE DIPHOSPHO-4-KETO-RHAMNOSE 3,5-EPIMERASE"/>
    <property type="match status" value="1"/>
</dbReference>
<dbReference type="Pfam" id="PF00908">
    <property type="entry name" value="dTDP_sugar_isom"/>
    <property type="match status" value="1"/>
</dbReference>
<dbReference type="SUPFAM" id="SSF51182">
    <property type="entry name" value="RmlC-like cupins"/>
    <property type="match status" value="1"/>
</dbReference>
<feature type="chain" id="PRO_0000395349" description="dTDP-4-dehydrorhamnose 3,5-epimerase">
    <location>
        <begin position="1"/>
        <end position="202"/>
    </location>
</feature>
<feature type="active site" description="Proton acceptor" evidence="13 15">
    <location>
        <position position="62"/>
    </location>
</feature>
<feature type="active site" description="Proton donor" evidence="3">
    <location>
        <position position="132"/>
    </location>
</feature>
<feature type="binding site" evidence="7 15">
    <location>
        <position position="23"/>
    </location>
    <ligand>
        <name>substrate</name>
    </ligand>
</feature>
<feature type="binding site" evidence="7 15">
    <location>
        <position position="28"/>
    </location>
    <ligand>
        <name>substrate</name>
    </ligand>
</feature>
<feature type="binding site" evidence="13 15">
    <location>
        <begin position="47"/>
        <end position="49"/>
    </location>
    <ligand>
        <name>substrate</name>
    </ligand>
</feature>
<feature type="binding site" evidence="7 15">
    <location>
        <position position="59"/>
    </location>
    <ligand>
        <name>substrate</name>
    </ligand>
</feature>
<feature type="binding site" evidence="7 12 14">
    <location>
        <position position="72"/>
    </location>
    <ligand>
        <name>substrate</name>
    </ligand>
</feature>
<feature type="binding site" evidence="7 12 14 15">
    <location>
        <position position="119"/>
    </location>
    <ligand>
        <name>substrate</name>
    </ligand>
</feature>
<feature type="binding site" evidence="3">
    <location>
        <position position="143"/>
    </location>
    <ligand>
        <name>substrate</name>
    </ligand>
</feature>
<feature type="binding site" evidence="3">
    <location>
        <position position="170"/>
    </location>
    <ligand>
        <name>substrate</name>
    </ligand>
</feature>
<feature type="site" description="Participates in a stacking interaction with the thymidine ring of dTDP-4-oxo-6-deoxyglucose" evidence="2">
    <location>
        <position position="138"/>
    </location>
</feature>
<feature type="strand" evidence="16">
    <location>
        <begin position="2"/>
        <end position="5"/>
    </location>
</feature>
<feature type="strand" evidence="16">
    <location>
        <begin position="11"/>
        <end position="15"/>
    </location>
</feature>
<feature type="strand" evidence="16">
    <location>
        <begin position="18"/>
        <end position="21"/>
    </location>
</feature>
<feature type="strand" evidence="16">
    <location>
        <begin position="24"/>
        <end position="27"/>
    </location>
</feature>
<feature type="helix" evidence="16">
    <location>
        <begin position="32"/>
        <end position="39"/>
    </location>
</feature>
<feature type="strand" evidence="16">
    <location>
        <begin position="47"/>
        <end position="53"/>
    </location>
</feature>
<feature type="strand" evidence="16">
    <location>
        <begin position="57"/>
        <end position="64"/>
    </location>
</feature>
<feature type="turn" evidence="16">
    <location>
        <begin position="66"/>
        <end position="68"/>
    </location>
</feature>
<feature type="strand" evidence="16">
    <location>
        <begin position="72"/>
        <end position="86"/>
    </location>
</feature>
<feature type="turn" evidence="16">
    <location>
        <begin position="93"/>
        <end position="96"/>
    </location>
</feature>
<feature type="strand" evidence="16">
    <location>
        <begin position="98"/>
        <end position="104"/>
    </location>
</feature>
<feature type="turn" evidence="16">
    <location>
        <begin position="105"/>
        <end position="107"/>
    </location>
</feature>
<feature type="strand" evidence="16">
    <location>
        <begin position="110"/>
        <end position="113"/>
    </location>
</feature>
<feature type="strand" evidence="16">
    <location>
        <begin position="118"/>
        <end position="123"/>
    </location>
</feature>
<feature type="strand" evidence="16">
    <location>
        <begin position="125"/>
        <end position="136"/>
    </location>
</feature>
<feature type="turn" evidence="16">
    <location>
        <begin position="140"/>
        <end position="142"/>
    </location>
</feature>
<feature type="strand" evidence="16">
    <location>
        <begin position="143"/>
        <end position="145"/>
    </location>
</feature>
<feature type="turn" evidence="16">
    <location>
        <begin position="151"/>
        <end position="153"/>
    </location>
</feature>
<feature type="strand" evidence="17">
    <location>
        <begin position="160"/>
        <end position="163"/>
    </location>
</feature>
<feature type="helix" evidence="16">
    <location>
        <begin position="169"/>
        <end position="172"/>
    </location>
</feature>
<feature type="helix" evidence="16">
    <location>
        <begin position="177"/>
        <end position="182"/>
    </location>
</feature>
<feature type="helix" evidence="16">
    <location>
        <begin position="189"/>
        <end position="199"/>
    </location>
</feature>
<reference key="1">
    <citation type="journal article" date="1998" name="Nature">
        <title>Deciphering the biology of Mycobacterium tuberculosis from the complete genome sequence.</title>
        <authorList>
            <person name="Cole S.T."/>
            <person name="Brosch R."/>
            <person name="Parkhill J."/>
            <person name="Garnier T."/>
            <person name="Churcher C.M."/>
            <person name="Harris D.E."/>
            <person name="Gordon S.V."/>
            <person name="Eiglmeier K."/>
            <person name="Gas S."/>
            <person name="Barry C.E. III"/>
            <person name="Tekaia F."/>
            <person name="Badcock K."/>
            <person name="Basham D."/>
            <person name="Brown D."/>
            <person name="Chillingworth T."/>
            <person name="Connor R."/>
            <person name="Davies R.M."/>
            <person name="Devlin K."/>
            <person name="Feltwell T."/>
            <person name="Gentles S."/>
            <person name="Hamlin N."/>
            <person name="Holroyd S."/>
            <person name="Hornsby T."/>
            <person name="Jagels K."/>
            <person name="Krogh A."/>
            <person name="McLean J."/>
            <person name="Moule S."/>
            <person name="Murphy L.D."/>
            <person name="Oliver S."/>
            <person name="Osborne J."/>
            <person name="Quail M.A."/>
            <person name="Rajandream M.A."/>
            <person name="Rogers J."/>
            <person name="Rutter S."/>
            <person name="Seeger K."/>
            <person name="Skelton S."/>
            <person name="Squares S."/>
            <person name="Squares R."/>
            <person name="Sulston J.E."/>
            <person name="Taylor K."/>
            <person name="Whitehead S."/>
            <person name="Barrell B.G."/>
        </authorList>
    </citation>
    <scope>NUCLEOTIDE SEQUENCE [LARGE SCALE GENOMIC DNA]</scope>
    <source>
        <strain>ATCC 25618 / H37Rv</strain>
    </source>
</reference>
<reference key="2">
    <citation type="journal article" date="2006" name="Biochem. Biophys. Res. Commun.">
        <title>rmlB and rmlC genes are essential for growth of mycobacteria.</title>
        <authorList>
            <person name="Li W."/>
            <person name="Xin Y."/>
            <person name="McNeil M.R."/>
            <person name="Ma Y."/>
        </authorList>
    </citation>
    <scope>FUNCTION IN DTDP-RHAMNOSE BIOSYNTHESIS</scope>
    <scope>CATALYTIC ACTIVITY</scope>
</reference>
<reference key="3">
    <citation type="journal article" date="2008" name="BMC Syst. Biol.">
        <title>targetTB: a target identification pipeline for Mycobacterium tuberculosis through an interactome, reactome and genome-scale structural analysis.</title>
        <authorList>
            <person name="Raman K."/>
            <person name="Yeturu K."/>
            <person name="Chandra N."/>
        </authorList>
    </citation>
    <scope>IDENTIFICATION AS A DRUG TARGET [LARGE SCALE ANALYSIS]</scope>
</reference>
<reference key="4">
    <citation type="journal article" date="2011" name="Mol. Cell. Proteomics">
        <title>Proteogenomic analysis of Mycobacterium tuberculosis by high resolution mass spectrometry.</title>
        <authorList>
            <person name="Kelkar D.S."/>
            <person name="Kumar D."/>
            <person name="Kumar P."/>
            <person name="Balakrishnan L."/>
            <person name="Muthusamy B."/>
            <person name="Yadav A.K."/>
            <person name="Shrivastava P."/>
            <person name="Marimuthu A."/>
            <person name="Anand S."/>
            <person name="Sundaram H."/>
            <person name="Kingsbury R."/>
            <person name="Harsha H.C."/>
            <person name="Nair B."/>
            <person name="Prasad T.S."/>
            <person name="Chauhan D.S."/>
            <person name="Katoch K."/>
            <person name="Katoch V.M."/>
            <person name="Kumar P."/>
            <person name="Chaerkady R."/>
            <person name="Ramachandran S."/>
            <person name="Dash D."/>
            <person name="Pandey A."/>
        </authorList>
    </citation>
    <scope>IDENTIFICATION BY MASS SPECTROMETRY [LARGE SCALE ANALYSIS]</scope>
    <source>
        <strain>ATCC 25618 / H37Rv</strain>
    </source>
</reference>
<reference key="5">
    <citation type="journal article" date="2003" name="Bioorg. Med. Chem. Lett.">
        <title>Novel inhibitors of an emerging target in Mycobacterium tuberculosis; substituted thiazolidinones as inhibitors of dTDP-rhamnose synthesis.</title>
        <authorList>
            <person name="Babaoglu K."/>
            <person name="Page M.A."/>
            <person name="Jones V.C."/>
            <person name="McNeil M.R."/>
            <person name="Dong C."/>
            <person name="Naismith J.H."/>
            <person name="Lee R.E."/>
        </authorList>
    </citation>
    <scope>X-RAY CRYSTALLOGRAPHY (2.2 ANGSTROMS) IN COMPLEX WITH SUBSTRATE ANALOG</scope>
    <scope>SUBUNIT</scope>
</reference>
<reference key="6">
    <citation type="journal article" date="2004" name="Acta Crystallogr. D">
        <title>Mycobacterium tuberculosis RmlC epimerase (Rv3465): a promising drug-target structure in the rhamnose pathway.</title>
        <authorList>
            <person name="Kantardjieff K.A."/>
            <person name="Kim C.Y."/>
            <person name="Naranjo C."/>
            <person name="Waldo G.S."/>
            <person name="Lekin T."/>
            <person name="Segelke B.W."/>
            <person name="Zemla A."/>
            <person name="Park M.S."/>
            <person name="Terwilliger T.C."/>
            <person name="Rupp B."/>
        </authorList>
    </citation>
    <scope>X-RAY CRYSTALLOGRAPHY (1.7 ANGSTROMS)</scope>
    <scope>SUBUNIT</scope>
</reference>
<reference key="7">
    <citation type="journal article" date="2007" name="J. Mol. Biol.">
        <title>RmlC, a C3' and C5' carbohydrate epimerase, appears to operate via an intermediate with an unusual twist boat conformation.</title>
        <authorList>
            <person name="Dong C."/>
            <person name="Major L.L."/>
            <person name="Srikannathasan V."/>
            <person name="Errey J.C."/>
            <person name="Giraud M.F."/>
            <person name="Lam J.S."/>
            <person name="Graninger M."/>
            <person name="Messner P."/>
            <person name="McNeil M.R."/>
            <person name="Field R.A."/>
            <person name="Whitfield C."/>
            <person name="Naismith J.H."/>
        </authorList>
    </citation>
    <scope>X-RAY CRYSTALLOGRAPHY (1.79 ANGSTROMS) IN COMPLEX WITH SUBSTRATE ANALOG</scope>
    <scope>REACTION MECHANISM</scope>
    <scope>SUBUNIT</scope>
</reference>